<accession>O96720</accession>
<accession>Q8SSL4</accession>
<feature type="chain" id="PRO_0000174951" description="Thymidine kinase">
    <location>
        <begin position="1"/>
        <end position="212"/>
    </location>
</feature>
<feature type="active site" description="Proton acceptor" evidence="2">
    <location>
        <position position="87"/>
    </location>
</feature>
<feature type="binding site" evidence="2">
    <location>
        <begin position="11"/>
        <end position="18"/>
    </location>
    <ligand>
        <name>ATP</name>
        <dbReference type="ChEBI" id="CHEBI:30616"/>
    </ligand>
</feature>
<feature type="binding site" evidence="1">
    <location>
        <begin position="43"/>
        <end position="45"/>
    </location>
    <ligand>
        <name>ATP</name>
        <dbReference type="ChEBI" id="CHEBI:30616"/>
    </ligand>
</feature>
<feature type="binding site" evidence="1">
    <location>
        <begin position="86"/>
        <end position="89"/>
    </location>
    <ligand>
        <name>ATP</name>
        <dbReference type="ChEBI" id="CHEBI:30616"/>
    </ligand>
</feature>
<feature type="binding site" evidence="1">
    <location>
        <position position="119"/>
    </location>
    <ligand>
        <name>substrate</name>
    </ligand>
</feature>
<feature type="binding site" evidence="1">
    <location>
        <position position="144"/>
    </location>
    <ligand>
        <name>Zn(2+)</name>
        <dbReference type="ChEBI" id="CHEBI:29105"/>
    </ligand>
</feature>
<feature type="binding site" evidence="1">
    <location>
        <position position="147"/>
    </location>
    <ligand>
        <name>Zn(2+)</name>
        <dbReference type="ChEBI" id="CHEBI:29105"/>
    </ligand>
</feature>
<feature type="binding site" evidence="1">
    <location>
        <position position="183"/>
    </location>
    <ligand>
        <name>Zn(2+)</name>
        <dbReference type="ChEBI" id="CHEBI:29105"/>
    </ligand>
</feature>
<feature type="binding site" evidence="1">
    <location>
        <position position="186"/>
    </location>
    <ligand>
        <name>Zn(2+)</name>
        <dbReference type="ChEBI" id="CHEBI:29105"/>
    </ligand>
</feature>
<proteinExistence type="inferred from homology"/>
<keyword id="KW-0067">ATP-binding</keyword>
<keyword id="KW-0237">DNA synthesis</keyword>
<keyword id="KW-0418">Kinase</keyword>
<keyword id="KW-0479">Metal-binding</keyword>
<keyword id="KW-0547">Nucleotide-binding</keyword>
<keyword id="KW-1185">Reference proteome</keyword>
<keyword id="KW-0808">Transferase</keyword>
<keyword id="KW-0862">Zinc</keyword>
<evidence type="ECO:0000250" key="1"/>
<evidence type="ECO:0000255" key="2"/>
<evidence type="ECO:0000305" key="3"/>
<organism>
    <name type="scientific">Encephalitozoon cuniculi (strain GB-M1)</name>
    <name type="common">Microsporidian parasite</name>
    <dbReference type="NCBI Taxonomy" id="284813"/>
    <lineage>
        <taxon>Eukaryota</taxon>
        <taxon>Fungi</taxon>
        <taxon>Fungi incertae sedis</taxon>
        <taxon>Microsporidia</taxon>
        <taxon>Unikaryonidae</taxon>
        <taxon>Encephalitozoon</taxon>
    </lineage>
</organism>
<comment type="catalytic activity">
    <reaction>
        <text>thymidine + ATP = dTMP + ADP + H(+)</text>
        <dbReference type="Rhea" id="RHEA:19129"/>
        <dbReference type="ChEBI" id="CHEBI:15378"/>
        <dbReference type="ChEBI" id="CHEBI:17748"/>
        <dbReference type="ChEBI" id="CHEBI:30616"/>
        <dbReference type="ChEBI" id="CHEBI:63528"/>
        <dbReference type="ChEBI" id="CHEBI:456216"/>
        <dbReference type="EC" id="2.7.1.21"/>
    </reaction>
</comment>
<comment type="similarity">
    <text evidence="3">Belongs to the thymidine kinase family.</text>
</comment>
<name>KITH_ENCCU</name>
<sequence length="212" mass="23647">MTRGTLNFVTSPMNAGKTANMLLRARHAATLGRRVLLAKPLSDTRHESSVIRSRCGIEMKCDLCAGPEFSFTKDVLYGDVDILLVDEAQFLSSRQIDELREVADVHGIPVWCYGLLTDFKKNLFEGSKRLVELCDKMIELDIVCYFCKADGRFHLKYANGKAVVEGPSIDISIPGDGKFVAVCHMCWTEKTSTSEEVQDPRVLCAKVIPVDR</sequence>
<gene>
    <name type="primary">TK</name>
    <name type="ordered locus">ECU01_0740i</name>
</gene>
<protein>
    <recommendedName>
        <fullName>Thymidine kinase</fullName>
        <ecNumber>2.7.1.21</ecNumber>
    </recommendedName>
</protein>
<dbReference type="EC" id="2.7.1.21"/>
<dbReference type="EMBL" id="AL391737">
    <property type="protein sequence ID" value="CAD24944.3"/>
    <property type="molecule type" value="Genomic_DNA"/>
</dbReference>
<dbReference type="EMBL" id="AJ006824">
    <property type="protein sequence ID" value="CAA07261.1"/>
    <property type="molecule type" value="Genomic_DNA"/>
</dbReference>
<dbReference type="RefSeq" id="XP_965909.1">
    <property type="nucleotide sequence ID" value="XM_960816.1"/>
</dbReference>
<dbReference type="SMR" id="O96720"/>
<dbReference type="STRING" id="284813.O96720"/>
<dbReference type="VEuPathDB" id="MicrosporidiaDB:ECU01_0740i"/>
<dbReference type="HOGENOM" id="CLU_064400_2_2_1"/>
<dbReference type="InParanoid" id="O96720"/>
<dbReference type="OMA" id="GTMDCGK"/>
<dbReference type="Proteomes" id="UP000000819">
    <property type="component" value="Chromosome I"/>
</dbReference>
<dbReference type="GO" id="GO:0005829">
    <property type="term" value="C:cytosol"/>
    <property type="evidence" value="ECO:0007669"/>
    <property type="project" value="TreeGrafter"/>
</dbReference>
<dbReference type="GO" id="GO:0005524">
    <property type="term" value="F:ATP binding"/>
    <property type="evidence" value="ECO:0007669"/>
    <property type="project" value="UniProtKB-KW"/>
</dbReference>
<dbReference type="GO" id="GO:0046872">
    <property type="term" value="F:metal ion binding"/>
    <property type="evidence" value="ECO:0007669"/>
    <property type="project" value="UniProtKB-KW"/>
</dbReference>
<dbReference type="GO" id="GO:0004797">
    <property type="term" value="F:thymidine kinase activity"/>
    <property type="evidence" value="ECO:0007669"/>
    <property type="project" value="UniProtKB-EC"/>
</dbReference>
<dbReference type="GO" id="GO:0071897">
    <property type="term" value="P:DNA biosynthetic process"/>
    <property type="evidence" value="ECO:0007669"/>
    <property type="project" value="UniProtKB-KW"/>
</dbReference>
<dbReference type="GO" id="GO:0046104">
    <property type="term" value="P:thymidine metabolic process"/>
    <property type="evidence" value="ECO:0007669"/>
    <property type="project" value="TreeGrafter"/>
</dbReference>
<dbReference type="Gene3D" id="3.40.50.300">
    <property type="entry name" value="P-loop containing nucleotide triphosphate hydrolases"/>
    <property type="match status" value="1"/>
</dbReference>
<dbReference type="InterPro" id="IPR027417">
    <property type="entry name" value="P-loop_NTPase"/>
</dbReference>
<dbReference type="InterPro" id="IPR001267">
    <property type="entry name" value="Thymidine_kinase"/>
</dbReference>
<dbReference type="PANTHER" id="PTHR11441">
    <property type="entry name" value="THYMIDINE KINASE"/>
    <property type="match status" value="1"/>
</dbReference>
<dbReference type="PANTHER" id="PTHR11441:SF0">
    <property type="entry name" value="THYMIDINE KINASE, CYTOSOLIC"/>
    <property type="match status" value="1"/>
</dbReference>
<dbReference type="Pfam" id="PF00265">
    <property type="entry name" value="TK"/>
    <property type="match status" value="1"/>
</dbReference>
<dbReference type="PIRSF" id="PIRSF035805">
    <property type="entry name" value="TK_cell"/>
    <property type="match status" value="1"/>
</dbReference>
<dbReference type="SUPFAM" id="SSF52540">
    <property type="entry name" value="P-loop containing nucleoside triphosphate hydrolases"/>
    <property type="match status" value="1"/>
</dbReference>
<reference key="1">
    <citation type="journal article" date="2001" name="Genome Res.">
        <title>Sequence and analysis of chromosome I of the amitochondriate intracellular parasite Encephalitozoon cuniculi (Microspora).</title>
        <authorList>
            <person name="Peyret P."/>
            <person name="Katinka M.D."/>
            <person name="Duprat S."/>
            <person name="Duffieux F."/>
            <person name="Barbe V."/>
            <person name="Barbazanges M."/>
            <person name="Weissenbach J."/>
            <person name="Saurin W."/>
            <person name="Vivares C.P."/>
        </authorList>
    </citation>
    <scope>NUCLEOTIDE SEQUENCE [LARGE SCALE GENOMIC DNA]</scope>
    <source>
        <strain>GB-M1</strain>
    </source>
</reference>
<reference key="2">
    <citation type="journal article" date="2001" name="Nature">
        <title>Genome sequence and gene compaction of the eukaryote parasite Encephalitozoon cuniculi.</title>
        <authorList>
            <person name="Katinka M.D."/>
            <person name="Duprat S."/>
            <person name="Cornillot E."/>
            <person name="Metenier G."/>
            <person name="Thomarat F."/>
            <person name="Prensier G."/>
            <person name="Barbe V."/>
            <person name="Peyretaillade E."/>
            <person name="Brottier P."/>
            <person name="Wincker P."/>
            <person name="Delbac F."/>
            <person name="El Alaoui H."/>
            <person name="Peyret P."/>
            <person name="Saurin W."/>
            <person name="Gouy M."/>
            <person name="Weissenbach J."/>
            <person name="Vivares C.P."/>
        </authorList>
    </citation>
    <scope>NUCLEOTIDE SEQUENCE [LARGE SCALE GENOMIC DNA]</scope>
    <source>
        <strain>GB-M1</strain>
    </source>
</reference>
<reference key="3">
    <citation type="journal article" date="2009" name="BMC Genomics">
        <title>Identification of transcriptional signals in Encephalitozoon cuniculi widespread among Microsporidia phylum: support for accurate structural genome annotation.</title>
        <authorList>
            <person name="Peyretaillade E."/>
            <person name="Goncalves O."/>
            <person name="Terrat S."/>
            <person name="Dugat-Bony E."/>
            <person name="Wincker P."/>
            <person name="Cornman R.S."/>
            <person name="Evans J.D."/>
            <person name="Delbac F."/>
            <person name="Peyret P."/>
        </authorList>
    </citation>
    <scope>GENOME REANNOTATION</scope>
    <source>
        <strain>GB-M1</strain>
    </source>
</reference>
<reference key="4">
    <citation type="submission" date="1998-06" db="EMBL/GenBank/DDBJ databases">
        <title>Putative thymidine kinase of Encephalitozoon cuniculi (Microspora) from the chromosome I.</title>
        <authorList>
            <person name="Duffieux F."/>
            <person name="Peyret P."/>
            <person name="Roe B.A."/>
            <person name="Vivares C.P."/>
        </authorList>
    </citation>
    <scope>NUCLEOTIDE SEQUENCE [GENOMIC DNA]</scope>
</reference>